<reference key="1">
    <citation type="journal article" date="1996" name="Plant Mol. Biol.">
        <title>Identification of a tobacco cDNA encoding a cytosolic NADP-isocitrate dehydrogenase.</title>
        <authorList>
            <person name="Galvez S."/>
            <person name="Hodges M."/>
            <person name="Decottignies P."/>
            <person name="Lancien M."/>
            <person name="Sangwan R."/>
            <person name="Dubois F."/>
            <person name="Lemarechal P."/>
            <person name="Cretin C."/>
            <person name="Gadal P."/>
        </authorList>
    </citation>
    <scope>NUCLEOTIDE SEQUENCE [MRNA]</scope>
</reference>
<accession>P50218</accession>
<evidence type="ECO:0000250" key="1"/>
<evidence type="ECO:0000305" key="2"/>
<proteinExistence type="evidence at transcript level"/>
<name>IDHC_TOBAC</name>
<keyword id="KW-0963">Cytoplasm</keyword>
<keyword id="KW-0329">Glyoxylate bypass</keyword>
<keyword id="KW-0460">Magnesium</keyword>
<keyword id="KW-0464">Manganese</keyword>
<keyword id="KW-0479">Metal-binding</keyword>
<keyword id="KW-0521">NADP</keyword>
<keyword id="KW-0560">Oxidoreductase</keyword>
<keyword id="KW-1185">Reference proteome</keyword>
<keyword id="KW-0816">Tricarboxylic acid cycle</keyword>
<sequence length="415" mass="46729">MTFDKIKVENPIVEMDGDEMTRVIWKSIKDKLICPFLELDIKYFDLGLPHRDATDDKVTVESAEATQKYNVAIKCATITPDEARVKEFNLKSMWRSPNGTIRNILNGTVFREPIMCKNIPRLVPGWTKPICIGRHAFGDQYRATDTVIQGAGKLKLVFVPEGTDEKTEFEVYNFTGAGGVALSMYNTDESVRSFAEASMNMAYQKKWPLYLSTKNTILKKYDGRFKDIFQEVYEANWKSKYEEAGIWYEHRLIDDMAAYALKSEGGYVWACKNYDGDVQSDFLAQGFGSLGLMTSVLVCPDGKTIEAEAAHGTVTRHYRVHQKGGETSTNSIASIFAWTRGLAHRATLDNNERLLDFTEKLEAACIGAVESGKMTKDLALIIHGSKLSRDHYLNTEEFIDAVADELKARLLKAKA</sequence>
<dbReference type="EC" id="1.1.1.42"/>
<dbReference type="EMBL" id="X77944">
    <property type="protein sequence ID" value="CAA54912.1"/>
    <property type="molecule type" value="mRNA"/>
</dbReference>
<dbReference type="PIR" id="S65065">
    <property type="entry name" value="S65065"/>
</dbReference>
<dbReference type="RefSeq" id="NP_001312892.1">
    <property type="nucleotide sequence ID" value="NM_001325963.1"/>
</dbReference>
<dbReference type="SMR" id="P50218"/>
<dbReference type="STRING" id="4097.P50218"/>
<dbReference type="PaxDb" id="4097-P50218"/>
<dbReference type="GeneID" id="107815853"/>
<dbReference type="KEGG" id="nta:107815853"/>
<dbReference type="OrthoDB" id="248923at2759"/>
<dbReference type="Proteomes" id="UP000084051">
    <property type="component" value="Unplaced"/>
</dbReference>
<dbReference type="GO" id="GO:0005739">
    <property type="term" value="C:mitochondrion"/>
    <property type="evidence" value="ECO:0000318"/>
    <property type="project" value="GO_Central"/>
</dbReference>
<dbReference type="GO" id="GO:0004450">
    <property type="term" value="F:isocitrate dehydrogenase (NADP+) activity"/>
    <property type="evidence" value="ECO:0000318"/>
    <property type="project" value="GO_Central"/>
</dbReference>
<dbReference type="GO" id="GO:0000287">
    <property type="term" value="F:magnesium ion binding"/>
    <property type="evidence" value="ECO:0007669"/>
    <property type="project" value="InterPro"/>
</dbReference>
<dbReference type="GO" id="GO:0051287">
    <property type="term" value="F:NAD binding"/>
    <property type="evidence" value="ECO:0007669"/>
    <property type="project" value="InterPro"/>
</dbReference>
<dbReference type="GO" id="GO:0006097">
    <property type="term" value="P:glyoxylate cycle"/>
    <property type="evidence" value="ECO:0007669"/>
    <property type="project" value="UniProtKB-KW"/>
</dbReference>
<dbReference type="GO" id="GO:0006102">
    <property type="term" value="P:isocitrate metabolic process"/>
    <property type="evidence" value="ECO:0000318"/>
    <property type="project" value="GO_Central"/>
</dbReference>
<dbReference type="GO" id="GO:0006739">
    <property type="term" value="P:NADP metabolic process"/>
    <property type="evidence" value="ECO:0000318"/>
    <property type="project" value="GO_Central"/>
</dbReference>
<dbReference type="GO" id="GO:0006099">
    <property type="term" value="P:tricarboxylic acid cycle"/>
    <property type="evidence" value="ECO:0007669"/>
    <property type="project" value="UniProtKB-KW"/>
</dbReference>
<dbReference type="FunFam" id="3.40.718.10:FF:000007">
    <property type="entry name" value="Isocitrate dehydrogenase [NADP]"/>
    <property type="match status" value="1"/>
</dbReference>
<dbReference type="Gene3D" id="3.40.718.10">
    <property type="entry name" value="Isopropylmalate Dehydrogenase"/>
    <property type="match status" value="1"/>
</dbReference>
<dbReference type="InterPro" id="IPR019818">
    <property type="entry name" value="IsoCit/isopropylmalate_DH_CS"/>
</dbReference>
<dbReference type="InterPro" id="IPR004790">
    <property type="entry name" value="Isocitrate_DH_NADP"/>
</dbReference>
<dbReference type="InterPro" id="IPR024084">
    <property type="entry name" value="IsoPropMal-DH-like_dom"/>
</dbReference>
<dbReference type="NCBIfam" id="TIGR00127">
    <property type="entry name" value="nadp_idh_euk"/>
    <property type="match status" value="1"/>
</dbReference>
<dbReference type="NCBIfam" id="NF006156">
    <property type="entry name" value="PRK08299.1"/>
    <property type="match status" value="1"/>
</dbReference>
<dbReference type="PANTHER" id="PTHR11822:SF21">
    <property type="entry name" value="ISOCITRATE DEHYDROGENASE [NADP], MITOCHONDRIAL"/>
    <property type="match status" value="1"/>
</dbReference>
<dbReference type="PANTHER" id="PTHR11822">
    <property type="entry name" value="NADP-SPECIFIC ISOCITRATE DEHYDROGENASE"/>
    <property type="match status" value="1"/>
</dbReference>
<dbReference type="Pfam" id="PF00180">
    <property type="entry name" value="Iso_dh"/>
    <property type="match status" value="1"/>
</dbReference>
<dbReference type="PIRSF" id="PIRSF000108">
    <property type="entry name" value="IDH_NADP"/>
    <property type="match status" value="1"/>
</dbReference>
<dbReference type="SMART" id="SM01329">
    <property type="entry name" value="Iso_dh"/>
    <property type="match status" value="1"/>
</dbReference>
<dbReference type="SUPFAM" id="SSF53659">
    <property type="entry name" value="Isocitrate/Isopropylmalate dehydrogenase-like"/>
    <property type="match status" value="1"/>
</dbReference>
<dbReference type="PROSITE" id="PS00470">
    <property type="entry name" value="IDH_IMDH"/>
    <property type="match status" value="1"/>
</dbReference>
<comment type="function">
    <text evidence="1">May supply 2-oxoglutarate for amino acid biosynthesis and ammonia assimilation via the glutamine synthetase/glutamate synthase (GS/GOGAT) pathway.</text>
</comment>
<comment type="catalytic activity">
    <reaction>
        <text>D-threo-isocitrate + NADP(+) = 2-oxoglutarate + CO2 + NADPH</text>
        <dbReference type="Rhea" id="RHEA:19629"/>
        <dbReference type="ChEBI" id="CHEBI:15562"/>
        <dbReference type="ChEBI" id="CHEBI:16526"/>
        <dbReference type="ChEBI" id="CHEBI:16810"/>
        <dbReference type="ChEBI" id="CHEBI:57783"/>
        <dbReference type="ChEBI" id="CHEBI:58349"/>
        <dbReference type="EC" id="1.1.1.42"/>
    </reaction>
</comment>
<comment type="cofactor">
    <cofactor evidence="1">
        <name>Mg(2+)</name>
        <dbReference type="ChEBI" id="CHEBI:18420"/>
    </cofactor>
    <cofactor evidence="1">
        <name>Mn(2+)</name>
        <dbReference type="ChEBI" id="CHEBI:29035"/>
    </cofactor>
    <text evidence="1">Binds 1 Mg(2+) or Mn(2+) ion per subunit.</text>
</comment>
<comment type="subunit">
    <text evidence="1">Heterodimer.</text>
</comment>
<comment type="subcellular location">
    <subcellularLocation>
        <location evidence="1">Cytoplasm</location>
    </subcellularLocation>
</comment>
<comment type="similarity">
    <text evidence="2">Belongs to the isocitrate and isopropylmalate dehydrogenases family.</text>
</comment>
<feature type="chain" id="PRO_0000083586" description="Isocitrate dehydrogenase [NADP]">
    <location>
        <begin position="1"/>
        <end position="415"/>
    </location>
</feature>
<feature type="binding site" evidence="1">
    <location>
        <begin position="77"/>
        <end position="79"/>
    </location>
    <ligand>
        <name>NADP(+)</name>
        <dbReference type="ChEBI" id="CHEBI:58349"/>
    </ligand>
</feature>
<feature type="binding site" evidence="1">
    <location>
        <position position="79"/>
    </location>
    <ligand>
        <name>substrate</name>
    </ligand>
</feature>
<feature type="binding site" evidence="1">
    <location>
        <position position="84"/>
    </location>
    <ligand>
        <name>NADP(+)</name>
        <dbReference type="ChEBI" id="CHEBI:58349"/>
    </ligand>
</feature>
<feature type="binding site" evidence="1">
    <location>
        <begin position="96"/>
        <end position="102"/>
    </location>
    <ligand>
        <name>substrate</name>
    </ligand>
</feature>
<feature type="binding site" evidence="1">
    <location>
        <position position="111"/>
    </location>
    <ligand>
        <name>substrate</name>
    </ligand>
</feature>
<feature type="binding site" evidence="1">
    <location>
        <position position="134"/>
    </location>
    <ligand>
        <name>substrate</name>
    </ligand>
</feature>
<feature type="binding site" evidence="1">
    <location>
        <position position="254"/>
    </location>
    <ligand>
        <name>Mn(2+)</name>
        <dbReference type="ChEBI" id="CHEBI:29035"/>
    </ligand>
</feature>
<feature type="binding site" evidence="1">
    <location>
        <position position="262"/>
    </location>
    <ligand>
        <name>NADP(+)</name>
        <dbReference type="ChEBI" id="CHEBI:58349"/>
    </ligand>
</feature>
<feature type="binding site" evidence="1">
    <location>
        <position position="277"/>
    </location>
    <ligand>
        <name>Mn(2+)</name>
        <dbReference type="ChEBI" id="CHEBI:29035"/>
    </ligand>
</feature>
<feature type="binding site" evidence="1">
    <location>
        <begin position="312"/>
        <end position="317"/>
    </location>
    <ligand>
        <name>NADP(+)</name>
        <dbReference type="ChEBI" id="CHEBI:58349"/>
    </ligand>
</feature>
<feature type="binding site" evidence="1">
    <location>
        <position position="330"/>
    </location>
    <ligand>
        <name>NADP(+)</name>
        <dbReference type="ChEBI" id="CHEBI:58349"/>
    </ligand>
</feature>
<feature type="site" description="Critical for catalysis" evidence="1">
    <location>
        <position position="141"/>
    </location>
</feature>
<feature type="site" description="Critical for catalysis" evidence="1">
    <location>
        <position position="214"/>
    </location>
</feature>
<protein>
    <recommendedName>
        <fullName>Isocitrate dehydrogenase [NADP]</fullName>
        <shortName>IDH</shortName>
        <ecNumber>1.1.1.42</ecNumber>
    </recommendedName>
    <alternativeName>
        <fullName>IDP</fullName>
    </alternativeName>
    <alternativeName>
        <fullName>NADP(+)-specific ICDH</fullName>
    </alternativeName>
    <alternativeName>
        <fullName>Oxalosuccinate decarboxylase</fullName>
    </alternativeName>
</protein>
<organism>
    <name type="scientific">Nicotiana tabacum</name>
    <name type="common">Common tobacco</name>
    <dbReference type="NCBI Taxonomy" id="4097"/>
    <lineage>
        <taxon>Eukaryota</taxon>
        <taxon>Viridiplantae</taxon>
        <taxon>Streptophyta</taxon>
        <taxon>Embryophyta</taxon>
        <taxon>Tracheophyta</taxon>
        <taxon>Spermatophyta</taxon>
        <taxon>Magnoliopsida</taxon>
        <taxon>eudicotyledons</taxon>
        <taxon>Gunneridae</taxon>
        <taxon>Pentapetalae</taxon>
        <taxon>asterids</taxon>
        <taxon>lamiids</taxon>
        <taxon>Solanales</taxon>
        <taxon>Solanaceae</taxon>
        <taxon>Nicotianoideae</taxon>
        <taxon>Nicotianeae</taxon>
        <taxon>Nicotiana</taxon>
    </lineage>
</organism>